<evidence type="ECO:0000255" key="1">
    <source>
        <dbReference type="HAMAP-Rule" id="MF_02111"/>
    </source>
</evidence>
<evidence type="ECO:0000305" key="2"/>
<comment type="function">
    <text evidence="1">Catalyzes the covalent attachment of the prokaryotic ubiquitin-like protein modifier Pup to the proteasomal substrate proteins, thereby targeting them for proteasomal degradation. This tagging system is termed pupylation. The ligation reaction involves the side-chain carboxylate of the C-terminal glutamate of Pup and the side-chain amino group of a substrate lysine.</text>
</comment>
<comment type="catalytic activity">
    <reaction evidence="1">
        <text>ATP + [prokaryotic ubiquitin-like protein]-L-glutamate + [protein]-L-lysine = ADP + phosphate + N(6)-([prokaryotic ubiquitin-like protein]-gamma-L-glutamyl)-[protein]-L-lysine.</text>
        <dbReference type="EC" id="6.3.1.19"/>
    </reaction>
</comment>
<comment type="pathway">
    <text evidence="1">Protein degradation; proteasomal Pup-dependent pathway.</text>
</comment>
<comment type="pathway">
    <text evidence="1">Protein modification; protein pupylation.</text>
</comment>
<comment type="miscellaneous">
    <text evidence="1">The reaction mechanism probably proceeds via the activation of Pup by phosphorylation of its C-terminal glutamate, which is then subject to nucleophilic attack by the substrate lysine, resulting in an isopeptide bond and the release of phosphate as a good leaving group.</text>
</comment>
<comment type="similarity">
    <text evidence="1">Belongs to the Pup ligase/Pup deamidase family. Pup-conjugating enzyme subfamily.</text>
</comment>
<comment type="sequence caution" evidence="2">
    <conflict type="erroneous initiation">
        <sequence resource="EMBL-CDS" id="ABL91709"/>
    </conflict>
    <text>Truncated N-terminus.</text>
</comment>
<reference key="1">
    <citation type="submission" date="2006-12" db="EMBL/GenBank/DDBJ databases">
        <title>Complete sequence of chromosome of Mycobacterium sp. KMS.</title>
        <authorList>
            <consortium name="US DOE Joint Genome Institute"/>
            <person name="Copeland A."/>
            <person name="Lucas S."/>
            <person name="Lapidus A."/>
            <person name="Barry K."/>
            <person name="Detter J.C."/>
            <person name="Glavina del Rio T."/>
            <person name="Hammon N."/>
            <person name="Israni S."/>
            <person name="Dalin E."/>
            <person name="Tice H."/>
            <person name="Pitluck S."/>
            <person name="Kiss H."/>
            <person name="Brettin T."/>
            <person name="Bruce D."/>
            <person name="Han C."/>
            <person name="Tapia R."/>
            <person name="Gilna P."/>
            <person name="Schmutz J."/>
            <person name="Larimer F."/>
            <person name="Land M."/>
            <person name="Hauser L."/>
            <person name="Kyrpides N."/>
            <person name="Mikhailova N."/>
            <person name="Miller C.D."/>
            <person name="Richardson P."/>
        </authorList>
    </citation>
    <scope>NUCLEOTIDE SEQUENCE [LARGE SCALE GENOMIC DNA]</scope>
    <source>
        <strain>KMS</strain>
    </source>
</reference>
<organism>
    <name type="scientific">Mycobacterium sp. (strain KMS)</name>
    <dbReference type="NCBI Taxonomy" id="189918"/>
    <lineage>
        <taxon>Bacteria</taxon>
        <taxon>Bacillati</taxon>
        <taxon>Actinomycetota</taxon>
        <taxon>Actinomycetes</taxon>
        <taxon>Mycobacteriales</taxon>
        <taxon>Mycobacteriaceae</taxon>
        <taxon>Mycobacterium</taxon>
    </lineage>
</organism>
<gene>
    <name evidence="1" type="primary">pafA</name>
    <name type="ordered locus">Mkms_2512</name>
</gene>
<name>PAFA_MYCSK</name>
<accession>A1UFV1</accession>
<proteinExistence type="inferred from homology"/>
<keyword id="KW-0067">ATP-binding</keyword>
<keyword id="KW-0436">Ligase</keyword>
<keyword id="KW-0460">Magnesium</keyword>
<keyword id="KW-0479">Metal-binding</keyword>
<keyword id="KW-0547">Nucleotide-binding</keyword>
<keyword id="KW-0833">Ubl conjugation pathway</keyword>
<feature type="chain" id="PRO_0000395933" description="Pup--protein ligase">
    <location>
        <begin position="1"/>
        <end position="452"/>
    </location>
</feature>
<feature type="active site" description="Proton acceptor" evidence="1">
    <location>
        <position position="57"/>
    </location>
</feature>
<feature type="binding site" evidence="1">
    <location>
        <position position="9"/>
    </location>
    <ligand>
        <name>Mg(2+)</name>
        <dbReference type="ChEBI" id="CHEBI:18420"/>
    </ligand>
</feature>
<feature type="binding site" evidence="1">
    <location>
        <position position="53"/>
    </location>
    <ligand>
        <name>ATP</name>
        <dbReference type="ChEBI" id="CHEBI:30616"/>
    </ligand>
</feature>
<feature type="binding site" evidence="1">
    <location>
        <position position="55"/>
    </location>
    <ligand>
        <name>Mg(2+)</name>
        <dbReference type="ChEBI" id="CHEBI:18420"/>
    </ligand>
</feature>
<feature type="binding site" evidence="1">
    <location>
        <position position="63"/>
    </location>
    <ligand>
        <name>Mg(2+)</name>
        <dbReference type="ChEBI" id="CHEBI:18420"/>
    </ligand>
</feature>
<feature type="binding site" evidence="1">
    <location>
        <position position="66"/>
    </location>
    <ligand>
        <name>ATP</name>
        <dbReference type="ChEBI" id="CHEBI:30616"/>
    </ligand>
</feature>
<feature type="binding site" evidence="1">
    <location>
        <position position="419"/>
    </location>
    <ligand>
        <name>ATP</name>
        <dbReference type="ChEBI" id="CHEBI:30616"/>
    </ligand>
</feature>
<protein>
    <recommendedName>
        <fullName evidence="1">Pup--protein ligase</fullName>
        <ecNumber evidence="1">6.3.1.19</ecNumber>
    </recommendedName>
    <alternativeName>
        <fullName evidence="1">Proteasome accessory factor A</fullName>
    </alternativeName>
    <alternativeName>
        <fullName evidence="1">Pup-conjugating enzyme</fullName>
    </alternativeName>
</protein>
<dbReference type="EC" id="6.3.1.19" evidence="1"/>
<dbReference type="EMBL" id="CP000518">
    <property type="protein sequence ID" value="ABL91709.1"/>
    <property type="status" value="ALT_INIT"/>
    <property type="molecule type" value="Genomic_DNA"/>
</dbReference>
<dbReference type="SMR" id="A1UFV1"/>
<dbReference type="STRING" id="189918.Mkms_2512"/>
<dbReference type="KEGG" id="mkm:Mkms_2512"/>
<dbReference type="HOGENOM" id="CLU_040524_0_1_11"/>
<dbReference type="OrthoDB" id="9760627at2"/>
<dbReference type="UniPathway" id="UPA00997"/>
<dbReference type="UniPathway" id="UPA00998"/>
<dbReference type="GO" id="GO:0005524">
    <property type="term" value="F:ATP binding"/>
    <property type="evidence" value="ECO:0007669"/>
    <property type="project" value="UniProtKB-UniRule"/>
</dbReference>
<dbReference type="GO" id="GO:0016879">
    <property type="term" value="F:ligase activity, forming carbon-nitrogen bonds"/>
    <property type="evidence" value="ECO:0007669"/>
    <property type="project" value="InterPro"/>
</dbReference>
<dbReference type="GO" id="GO:0000287">
    <property type="term" value="F:magnesium ion binding"/>
    <property type="evidence" value="ECO:0007669"/>
    <property type="project" value="UniProtKB-UniRule"/>
</dbReference>
<dbReference type="GO" id="GO:0019787">
    <property type="term" value="F:ubiquitin-like protein transferase activity"/>
    <property type="evidence" value="ECO:0007669"/>
    <property type="project" value="UniProtKB-UniRule"/>
</dbReference>
<dbReference type="GO" id="GO:0019941">
    <property type="term" value="P:modification-dependent protein catabolic process"/>
    <property type="evidence" value="ECO:0007669"/>
    <property type="project" value="UniProtKB-UniRule"/>
</dbReference>
<dbReference type="GO" id="GO:0010498">
    <property type="term" value="P:proteasomal protein catabolic process"/>
    <property type="evidence" value="ECO:0007669"/>
    <property type="project" value="UniProtKB-UniRule"/>
</dbReference>
<dbReference type="GO" id="GO:0070490">
    <property type="term" value="P:protein pupylation"/>
    <property type="evidence" value="ECO:0007669"/>
    <property type="project" value="UniProtKB-UniRule"/>
</dbReference>
<dbReference type="HAMAP" id="MF_02111">
    <property type="entry name" value="Pup_ligase"/>
    <property type="match status" value="1"/>
</dbReference>
<dbReference type="InterPro" id="IPR022279">
    <property type="entry name" value="Pup_ligase"/>
</dbReference>
<dbReference type="InterPro" id="IPR004347">
    <property type="entry name" value="Pup_ligase/deamidase"/>
</dbReference>
<dbReference type="NCBIfam" id="TIGR03686">
    <property type="entry name" value="pupylate_PafA"/>
    <property type="match status" value="1"/>
</dbReference>
<dbReference type="PANTHER" id="PTHR42307">
    <property type="entry name" value="PUP DEAMIDASE/DEPUPYLASE"/>
    <property type="match status" value="1"/>
</dbReference>
<dbReference type="PANTHER" id="PTHR42307:SF3">
    <property type="entry name" value="PUP--PROTEIN LIGASE"/>
    <property type="match status" value="1"/>
</dbReference>
<dbReference type="Pfam" id="PF03136">
    <property type="entry name" value="Pup_ligase"/>
    <property type="match status" value="1"/>
</dbReference>
<dbReference type="PIRSF" id="PIRSF018077">
    <property type="entry name" value="UCP018077"/>
    <property type="match status" value="1"/>
</dbReference>
<sequence>MQRRIMGIETEFGVTCTFHGHRRLSPDEVARYLFRRVVSWGRSSNVFLRNGARLYLDVGSHPEYATAECDNLIQLVTHDRAGERVLEDLLIDAEQRLADEGIGGDIYLFKNNTDSAGNSYGCHENYLIVRAGEFSRISDVLLPFLVTRQLICGAGKVLQTPKAATFCLSQRAEHIWEGVSSATTRSRPIINTRDEPHADAEKYRRLHVIVGDSNMCESTTMLKVGTASLVLEMIEAGVPFRDFSLDNPIRAIREVSHDLTGRRPVRLAGGRQASALDIQREYYSRAVDYLQTREPNSQIEQVVDLWGRQLDAVESQDFAKVDTEIDWVIKRKLFQRYQDRYNMELSDPKISQLDLAYHDIKRGRGVFDLLQRKGLAARITTDEEIDAAVDTPPQTTRAKLRGEFISAAQEAGRDFTVDWVHLKLNDQAQRTVLCKDPFRSVDERVKRLIASM</sequence>